<protein>
    <recommendedName>
        <fullName evidence="1">Aspartyl/glutamyl-tRNA(Asn/Gln) amidotransferase subunit C</fullName>
        <shortName evidence="1">Asp/Glu-ADT subunit C</shortName>
        <ecNumber evidence="1">6.3.5.-</ecNumber>
    </recommendedName>
</protein>
<dbReference type="EC" id="6.3.5.-" evidence="1"/>
<dbReference type="EMBL" id="CP000046">
    <property type="protein sequence ID" value="AAW38402.1"/>
    <property type="molecule type" value="Genomic_DNA"/>
</dbReference>
<dbReference type="RefSeq" id="WP_000170162.1">
    <property type="nucleotide sequence ID" value="NZ_JBGOFO010000006.1"/>
</dbReference>
<dbReference type="SMR" id="Q5HEM1"/>
<dbReference type="GeneID" id="98346286"/>
<dbReference type="KEGG" id="sac:SACOL1962"/>
<dbReference type="HOGENOM" id="CLU_105899_1_2_9"/>
<dbReference type="Proteomes" id="UP000000530">
    <property type="component" value="Chromosome"/>
</dbReference>
<dbReference type="GO" id="GO:0050566">
    <property type="term" value="F:asparaginyl-tRNA synthase (glutamine-hydrolyzing) activity"/>
    <property type="evidence" value="ECO:0007669"/>
    <property type="project" value="RHEA"/>
</dbReference>
<dbReference type="GO" id="GO:0005524">
    <property type="term" value="F:ATP binding"/>
    <property type="evidence" value="ECO:0007669"/>
    <property type="project" value="UniProtKB-KW"/>
</dbReference>
<dbReference type="GO" id="GO:0050567">
    <property type="term" value="F:glutaminyl-tRNA synthase (glutamine-hydrolyzing) activity"/>
    <property type="evidence" value="ECO:0007669"/>
    <property type="project" value="UniProtKB-UniRule"/>
</dbReference>
<dbReference type="GO" id="GO:0070681">
    <property type="term" value="P:glutaminyl-tRNAGln biosynthesis via transamidation"/>
    <property type="evidence" value="ECO:0007669"/>
    <property type="project" value="TreeGrafter"/>
</dbReference>
<dbReference type="GO" id="GO:0006450">
    <property type="term" value="P:regulation of translational fidelity"/>
    <property type="evidence" value="ECO:0007669"/>
    <property type="project" value="InterPro"/>
</dbReference>
<dbReference type="GO" id="GO:0006412">
    <property type="term" value="P:translation"/>
    <property type="evidence" value="ECO:0007669"/>
    <property type="project" value="UniProtKB-UniRule"/>
</dbReference>
<dbReference type="Gene3D" id="1.10.20.60">
    <property type="entry name" value="Glu-tRNAGln amidotransferase C subunit, N-terminal domain"/>
    <property type="match status" value="1"/>
</dbReference>
<dbReference type="HAMAP" id="MF_00122">
    <property type="entry name" value="GatC"/>
    <property type="match status" value="1"/>
</dbReference>
<dbReference type="InterPro" id="IPR036113">
    <property type="entry name" value="Asp/Glu-ADT_sf_sub_c"/>
</dbReference>
<dbReference type="InterPro" id="IPR003837">
    <property type="entry name" value="GatC"/>
</dbReference>
<dbReference type="NCBIfam" id="TIGR00135">
    <property type="entry name" value="gatC"/>
    <property type="match status" value="1"/>
</dbReference>
<dbReference type="PANTHER" id="PTHR15004">
    <property type="entry name" value="GLUTAMYL-TRNA(GLN) AMIDOTRANSFERASE SUBUNIT C, MITOCHONDRIAL"/>
    <property type="match status" value="1"/>
</dbReference>
<dbReference type="PANTHER" id="PTHR15004:SF0">
    <property type="entry name" value="GLUTAMYL-TRNA(GLN) AMIDOTRANSFERASE SUBUNIT C, MITOCHONDRIAL"/>
    <property type="match status" value="1"/>
</dbReference>
<dbReference type="Pfam" id="PF02686">
    <property type="entry name" value="GatC"/>
    <property type="match status" value="1"/>
</dbReference>
<dbReference type="SUPFAM" id="SSF141000">
    <property type="entry name" value="Glu-tRNAGln amidotransferase C subunit"/>
    <property type="match status" value="1"/>
</dbReference>
<reference key="1">
    <citation type="journal article" date="2005" name="J. Bacteriol.">
        <title>Insights on evolution of virulence and resistance from the complete genome analysis of an early methicillin-resistant Staphylococcus aureus strain and a biofilm-producing methicillin-resistant Staphylococcus epidermidis strain.</title>
        <authorList>
            <person name="Gill S.R."/>
            <person name="Fouts D.E."/>
            <person name="Archer G.L."/>
            <person name="Mongodin E.F."/>
            <person name="DeBoy R.T."/>
            <person name="Ravel J."/>
            <person name="Paulsen I.T."/>
            <person name="Kolonay J.F."/>
            <person name="Brinkac L.M."/>
            <person name="Beanan M.J."/>
            <person name="Dodson R.J."/>
            <person name="Daugherty S.C."/>
            <person name="Madupu R."/>
            <person name="Angiuoli S.V."/>
            <person name="Durkin A.S."/>
            <person name="Haft D.H."/>
            <person name="Vamathevan J.J."/>
            <person name="Khouri H."/>
            <person name="Utterback T.R."/>
            <person name="Lee C."/>
            <person name="Dimitrov G."/>
            <person name="Jiang L."/>
            <person name="Qin H."/>
            <person name="Weidman J."/>
            <person name="Tran K."/>
            <person name="Kang K.H."/>
            <person name="Hance I.R."/>
            <person name="Nelson K.E."/>
            <person name="Fraser C.M."/>
        </authorList>
    </citation>
    <scope>NUCLEOTIDE SEQUENCE [LARGE SCALE GENOMIC DNA]</scope>
    <source>
        <strain>COL</strain>
    </source>
</reference>
<gene>
    <name evidence="1" type="primary">gatC</name>
    <name type="ordered locus">SACOL1962</name>
</gene>
<sequence length="100" mass="11268">MTKVTREEVEHIANLARLQISPEETEEMANTLESILDFAKQNDSADTEGVEPTYHVLDLQNVLREDKAIKGIPQELALKNAKETEDGQFKVPTIMNEEDA</sequence>
<evidence type="ECO:0000255" key="1">
    <source>
        <dbReference type="HAMAP-Rule" id="MF_00122"/>
    </source>
</evidence>
<feature type="chain" id="PRO_0000105329" description="Aspartyl/glutamyl-tRNA(Asn/Gln) amidotransferase subunit C">
    <location>
        <begin position="1"/>
        <end position="100"/>
    </location>
</feature>
<proteinExistence type="inferred from homology"/>
<keyword id="KW-0067">ATP-binding</keyword>
<keyword id="KW-0436">Ligase</keyword>
<keyword id="KW-0547">Nucleotide-binding</keyword>
<keyword id="KW-0648">Protein biosynthesis</keyword>
<organism>
    <name type="scientific">Staphylococcus aureus (strain COL)</name>
    <dbReference type="NCBI Taxonomy" id="93062"/>
    <lineage>
        <taxon>Bacteria</taxon>
        <taxon>Bacillati</taxon>
        <taxon>Bacillota</taxon>
        <taxon>Bacilli</taxon>
        <taxon>Bacillales</taxon>
        <taxon>Staphylococcaceae</taxon>
        <taxon>Staphylococcus</taxon>
    </lineage>
</organism>
<name>GATC_STAAC</name>
<comment type="function">
    <text evidence="1">Allows the formation of correctly charged Asn-tRNA(Asn) or Gln-tRNA(Gln) through the transamidation of misacylated Asp-tRNA(Asn) or Glu-tRNA(Gln) in organisms which lack either or both of asparaginyl-tRNA or glutaminyl-tRNA synthetases. The reaction takes place in the presence of glutamine and ATP through an activated phospho-Asp-tRNA(Asn) or phospho-Glu-tRNA(Gln).</text>
</comment>
<comment type="catalytic activity">
    <reaction evidence="1">
        <text>L-glutamyl-tRNA(Gln) + L-glutamine + ATP + H2O = L-glutaminyl-tRNA(Gln) + L-glutamate + ADP + phosphate + H(+)</text>
        <dbReference type="Rhea" id="RHEA:17521"/>
        <dbReference type="Rhea" id="RHEA-COMP:9681"/>
        <dbReference type="Rhea" id="RHEA-COMP:9684"/>
        <dbReference type="ChEBI" id="CHEBI:15377"/>
        <dbReference type="ChEBI" id="CHEBI:15378"/>
        <dbReference type="ChEBI" id="CHEBI:29985"/>
        <dbReference type="ChEBI" id="CHEBI:30616"/>
        <dbReference type="ChEBI" id="CHEBI:43474"/>
        <dbReference type="ChEBI" id="CHEBI:58359"/>
        <dbReference type="ChEBI" id="CHEBI:78520"/>
        <dbReference type="ChEBI" id="CHEBI:78521"/>
        <dbReference type="ChEBI" id="CHEBI:456216"/>
    </reaction>
</comment>
<comment type="catalytic activity">
    <reaction evidence="1">
        <text>L-aspartyl-tRNA(Asn) + L-glutamine + ATP + H2O = L-asparaginyl-tRNA(Asn) + L-glutamate + ADP + phosphate + 2 H(+)</text>
        <dbReference type="Rhea" id="RHEA:14513"/>
        <dbReference type="Rhea" id="RHEA-COMP:9674"/>
        <dbReference type="Rhea" id="RHEA-COMP:9677"/>
        <dbReference type="ChEBI" id="CHEBI:15377"/>
        <dbReference type="ChEBI" id="CHEBI:15378"/>
        <dbReference type="ChEBI" id="CHEBI:29985"/>
        <dbReference type="ChEBI" id="CHEBI:30616"/>
        <dbReference type="ChEBI" id="CHEBI:43474"/>
        <dbReference type="ChEBI" id="CHEBI:58359"/>
        <dbReference type="ChEBI" id="CHEBI:78515"/>
        <dbReference type="ChEBI" id="CHEBI:78516"/>
        <dbReference type="ChEBI" id="CHEBI:456216"/>
    </reaction>
</comment>
<comment type="subunit">
    <text evidence="1">Heterotrimer of A, B and C subunits.</text>
</comment>
<comment type="similarity">
    <text evidence="1">Belongs to the GatC family.</text>
</comment>
<accession>Q5HEM1</accession>